<name>RPOC_PORG3</name>
<comment type="function">
    <text evidence="1">DNA-dependent RNA polymerase catalyzes the transcription of DNA into RNA using the four ribonucleoside triphosphates as substrates.</text>
</comment>
<comment type="catalytic activity">
    <reaction evidence="1">
        <text>RNA(n) + a ribonucleoside 5'-triphosphate = RNA(n+1) + diphosphate</text>
        <dbReference type="Rhea" id="RHEA:21248"/>
        <dbReference type="Rhea" id="RHEA-COMP:14527"/>
        <dbReference type="Rhea" id="RHEA-COMP:17342"/>
        <dbReference type="ChEBI" id="CHEBI:33019"/>
        <dbReference type="ChEBI" id="CHEBI:61557"/>
        <dbReference type="ChEBI" id="CHEBI:140395"/>
        <dbReference type="EC" id="2.7.7.6"/>
    </reaction>
</comment>
<comment type="cofactor">
    <cofactor evidence="1">
        <name>Mg(2+)</name>
        <dbReference type="ChEBI" id="CHEBI:18420"/>
    </cofactor>
    <text evidence="1">Binds 1 Mg(2+) ion per subunit.</text>
</comment>
<comment type="cofactor">
    <cofactor evidence="1">
        <name>Zn(2+)</name>
        <dbReference type="ChEBI" id="CHEBI:29105"/>
    </cofactor>
    <text evidence="1">Binds 2 Zn(2+) ions per subunit.</text>
</comment>
<comment type="subunit">
    <text evidence="1">The RNAP catalytic core consists of 2 alpha, 1 beta, 1 beta' and 1 omega subunit. When a sigma factor is associated with the core the holoenzyme is formed, which can initiate transcription.</text>
</comment>
<comment type="similarity">
    <text evidence="1">Belongs to the RNA polymerase beta' chain family.</text>
</comment>
<gene>
    <name evidence="1" type="primary">rpoC</name>
    <name type="ordered locus">PGN_1570</name>
</gene>
<evidence type="ECO:0000255" key="1">
    <source>
        <dbReference type="HAMAP-Rule" id="MF_01322"/>
    </source>
</evidence>
<reference key="1">
    <citation type="journal article" date="2008" name="DNA Res.">
        <title>Determination of the genome sequence of Porphyromonas gingivalis strain ATCC 33277 and genomic comparison with strain W83 revealed extensive genome rearrangements in P. gingivalis.</title>
        <authorList>
            <person name="Naito M."/>
            <person name="Hirakawa H."/>
            <person name="Yamashita A."/>
            <person name="Ohara N."/>
            <person name="Shoji M."/>
            <person name="Yukitake H."/>
            <person name="Nakayama K."/>
            <person name="Toh H."/>
            <person name="Yoshimura F."/>
            <person name="Kuhara S."/>
            <person name="Hattori M."/>
            <person name="Hayashi T."/>
            <person name="Nakayama K."/>
        </authorList>
    </citation>
    <scope>NUCLEOTIDE SEQUENCE [LARGE SCALE GENOMIC DNA]</scope>
    <source>
        <strain>ATCC 33277 / DSM 20709 / CIP 103683 / JCM 12257 / NCTC 11834 / 2561</strain>
    </source>
</reference>
<organism>
    <name type="scientific">Porphyromonas gingivalis (strain ATCC 33277 / DSM 20709 / CIP 103683 / JCM 12257 / NCTC 11834 / 2561)</name>
    <dbReference type="NCBI Taxonomy" id="431947"/>
    <lineage>
        <taxon>Bacteria</taxon>
        <taxon>Pseudomonadati</taxon>
        <taxon>Bacteroidota</taxon>
        <taxon>Bacteroidia</taxon>
        <taxon>Bacteroidales</taxon>
        <taxon>Porphyromonadaceae</taxon>
        <taxon>Porphyromonas</taxon>
    </lineage>
</organism>
<keyword id="KW-0240">DNA-directed RNA polymerase</keyword>
<keyword id="KW-0460">Magnesium</keyword>
<keyword id="KW-0479">Metal-binding</keyword>
<keyword id="KW-0548">Nucleotidyltransferase</keyword>
<keyword id="KW-0804">Transcription</keyword>
<keyword id="KW-0808">Transferase</keyword>
<keyword id="KW-0862">Zinc</keyword>
<proteinExistence type="inferred from homology"/>
<sequence>MAFRKENKIKNNFSKIRITLASPEEILENSFGEVLKPETINYRTYKPERDGLFCERIFGPVKDFECHCGKYKRIRYRGIVCDRCGVEVTEKKVRRERMGHIHLVVPVAHIWYFRSLPNKIGYLLGLPTKKLDAIIYYERYVVIQPGVAEGLSQLDLLSEEEYLDKLDEIERTHKGNQNLEDTNPDKFIAKIGAEAIYDLLCRVDLDSISYELRDRANTDGSQQRKTEALKRLQVVESFRASKGVNRPEWMVMKVIPVIPPDLRPLVPLDGGRFATSDLNDLYRRVIIRNNRLKRLIEIKAPEVILRNEKRMLQEAVDSLFDNSRKSSAVKSDNNRPLKSLSDSLKGKQGRFRQNLLGKRVDYSARSVIVVGPELKMHECGLPKDMAAELYKPFIIRKLIERGIVKTVKSAKKIVDRKEPVIWDILEYVMKGHPVLLNRAPTLHRLGIQAFQPKLIEGKAIQLHPLSCTAFNADFDGDQMAVHLPLSNEAILEAQLLMLASHNILNPANGAPITVPSQDMVLGLYYITKLRPNIKGHGLIFYGPEEATIAYNEGKVDIHAPIKVYVEDYENGELVRRMVETSVGRLMVNEYVPKKVGYVNEVLGKKALRDIIGSVIKICGVATTAKFLDDIKNLGYYMAFKGGLSFNLADVLIPDEKDQLIQEGYTAVEQIMQDYSMGFITFNERYNQIIDTWTHINGRLSNVLIKQLSSDNDGFNSVFMMMDSGARGSKEQIRQLSGMRGLMAKPQKSGAEGGQIIENPILSNFKEGLSVLEYFISTHGARKGLADTALKTADAGYLTRRLVDVSHDVIITEEDCGTLRGLLTTELKQNEDVVASLYERILGRVSVHDIIHPTTGDIIVRAGEEIREQAAQIIEDSPIEAVEIRSVLTCESKKGVCAKCYGRNLATNRMVQRGEVVGVIAAQSIGEPGTQLTLRTFHVGGIASNVATENSLLSKYDGILEFEELRAVDATDESHQVVVSRMTELRIADPNTGIILANHNIPYGAKLFFRQGDAVKKGDKIIEWDPFNAVIVSEVAGTLSFEGVVENVTFKMESDETTGLKEKIIIESKDKTMAPYARIIDENGEMLKNYSLPMGAHVVKDDGDTVKVGEILVKIPRSVGKAGDITGGLPRVTELFEARNPSNPAIVSEIDGEIGFGKLKRGNREITVTSKLGEEKKYLIPLSKQLLVQENDFVRAGTPLSDGAITPADILAIKGPTAVQEYIVNEVQDVYRLQGVKINDKHFEVIVRQMMRKVEIVDPGDTLFLEQQVVDKFEVMEENDRIWGKKVVIDAGDSQVLKAGQIVTARKLRDENSMLKRKDLKIVKVRDAKSATASQILQGITRAALQTKSFMSAASFQETTKVLNEAAICGKTDYLEGLKENVICGHLIPAGTGLRDYEKLVVMHRDDYEKATAERKSFLSVPTAEPAMEEAPSE</sequence>
<dbReference type="EC" id="2.7.7.6" evidence="1"/>
<dbReference type="EMBL" id="AP009380">
    <property type="protein sequence ID" value="BAG34089.1"/>
    <property type="molecule type" value="Genomic_DNA"/>
</dbReference>
<dbReference type="RefSeq" id="WP_012458380.1">
    <property type="nucleotide sequence ID" value="NC_010729.1"/>
</dbReference>
<dbReference type="SMR" id="B2RL44"/>
<dbReference type="GeneID" id="29256744"/>
<dbReference type="KEGG" id="pgn:PGN_1570"/>
<dbReference type="eggNOG" id="COG0086">
    <property type="taxonomic scope" value="Bacteria"/>
</dbReference>
<dbReference type="HOGENOM" id="CLU_000524_3_1_10"/>
<dbReference type="OrthoDB" id="9815296at2"/>
<dbReference type="BioCyc" id="PGIN431947:G1G2V-1770-MONOMER"/>
<dbReference type="Proteomes" id="UP000008842">
    <property type="component" value="Chromosome"/>
</dbReference>
<dbReference type="GO" id="GO:0000428">
    <property type="term" value="C:DNA-directed RNA polymerase complex"/>
    <property type="evidence" value="ECO:0007669"/>
    <property type="project" value="UniProtKB-KW"/>
</dbReference>
<dbReference type="GO" id="GO:0003677">
    <property type="term" value="F:DNA binding"/>
    <property type="evidence" value="ECO:0007669"/>
    <property type="project" value="UniProtKB-UniRule"/>
</dbReference>
<dbReference type="GO" id="GO:0003899">
    <property type="term" value="F:DNA-directed RNA polymerase activity"/>
    <property type="evidence" value="ECO:0007669"/>
    <property type="project" value="UniProtKB-UniRule"/>
</dbReference>
<dbReference type="GO" id="GO:0000287">
    <property type="term" value="F:magnesium ion binding"/>
    <property type="evidence" value="ECO:0007669"/>
    <property type="project" value="UniProtKB-UniRule"/>
</dbReference>
<dbReference type="GO" id="GO:0008270">
    <property type="term" value="F:zinc ion binding"/>
    <property type="evidence" value="ECO:0007669"/>
    <property type="project" value="UniProtKB-UniRule"/>
</dbReference>
<dbReference type="GO" id="GO:0006351">
    <property type="term" value="P:DNA-templated transcription"/>
    <property type="evidence" value="ECO:0007669"/>
    <property type="project" value="UniProtKB-UniRule"/>
</dbReference>
<dbReference type="CDD" id="cd02655">
    <property type="entry name" value="RNAP_beta'_C"/>
    <property type="match status" value="1"/>
</dbReference>
<dbReference type="CDD" id="cd01609">
    <property type="entry name" value="RNAP_beta'_N"/>
    <property type="match status" value="1"/>
</dbReference>
<dbReference type="Gene3D" id="1.10.132.30">
    <property type="match status" value="1"/>
</dbReference>
<dbReference type="Gene3D" id="1.10.150.390">
    <property type="match status" value="1"/>
</dbReference>
<dbReference type="Gene3D" id="1.10.1790.20">
    <property type="match status" value="1"/>
</dbReference>
<dbReference type="Gene3D" id="1.10.40.90">
    <property type="match status" value="1"/>
</dbReference>
<dbReference type="Gene3D" id="2.40.40.20">
    <property type="match status" value="1"/>
</dbReference>
<dbReference type="Gene3D" id="2.40.50.100">
    <property type="match status" value="3"/>
</dbReference>
<dbReference type="Gene3D" id="4.10.860.120">
    <property type="entry name" value="RNA polymerase II, clamp domain"/>
    <property type="match status" value="1"/>
</dbReference>
<dbReference type="Gene3D" id="1.10.274.100">
    <property type="entry name" value="RNA polymerase Rpb1, domain 3"/>
    <property type="match status" value="1"/>
</dbReference>
<dbReference type="HAMAP" id="MF_01322">
    <property type="entry name" value="RNApol_bact_RpoC"/>
    <property type="match status" value="1"/>
</dbReference>
<dbReference type="InterPro" id="IPR045867">
    <property type="entry name" value="DNA-dir_RpoC_beta_prime"/>
</dbReference>
<dbReference type="InterPro" id="IPR012754">
    <property type="entry name" value="DNA-dir_RpoC_beta_prime_bact"/>
</dbReference>
<dbReference type="InterPro" id="IPR000722">
    <property type="entry name" value="RNA_pol_asu"/>
</dbReference>
<dbReference type="InterPro" id="IPR006592">
    <property type="entry name" value="RNA_pol_N"/>
</dbReference>
<dbReference type="InterPro" id="IPR007080">
    <property type="entry name" value="RNA_pol_Rpb1_1"/>
</dbReference>
<dbReference type="InterPro" id="IPR007066">
    <property type="entry name" value="RNA_pol_Rpb1_3"/>
</dbReference>
<dbReference type="InterPro" id="IPR042102">
    <property type="entry name" value="RNA_pol_Rpb1_3_sf"/>
</dbReference>
<dbReference type="InterPro" id="IPR007083">
    <property type="entry name" value="RNA_pol_Rpb1_4"/>
</dbReference>
<dbReference type="InterPro" id="IPR007081">
    <property type="entry name" value="RNA_pol_Rpb1_5"/>
</dbReference>
<dbReference type="InterPro" id="IPR044893">
    <property type="entry name" value="RNA_pol_Rpb1_clamp_domain"/>
</dbReference>
<dbReference type="InterPro" id="IPR038120">
    <property type="entry name" value="Rpb1_funnel_sf"/>
</dbReference>
<dbReference type="NCBIfam" id="TIGR02386">
    <property type="entry name" value="rpoC_TIGR"/>
    <property type="match status" value="1"/>
</dbReference>
<dbReference type="PANTHER" id="PTHR19376">
    <property type="entry name" value="DNA-DIRECTED RNA POLYMERASE"/>
    <property type="match status" value="1"/>
</dbReference>
<dbReference type="PANTHER" id="PTHR19376:SF54">
    <property type="entry name" value="DNA-DIRECTED RNA POLYMERASE SUBUNIT BETA"/>
    <property type="match status" value="1"/>
</dbReference>
<dbReference type="Pfam" id="PF04997">
    <property type="entry name" value="RNA_pol_Rpb1_1"/>
    <property type="match status" value="1"/>
</dbReference>
<dbReference type="Pfam" id="PF00623">
    <property type="entry name" value="RNA_pol_Rpb1_2"/>
    <property type="match status" value="2"/>
</dbReference>
<dbReference type="Pfam" id="PF04983">
    <property type="entry name" value="RNA_pol_Rpb1_3"/>
    <property type="match status" value="1"/>
</dbReference>
<dbReference type="Pfam" id="PF05000">
    <property type="entry name" value="RNA_pol_Rpb1_4"/>
    <property type="match status" value="1"/>
</dbReference>
<dbReference type="Pfam" id="PF04998">
    <property type="entry name" value="RNA_pol_Rpb1_5"/>
    <property type="match status" value="1"/>
</dbReference>
<dbReference type="SMART" id="SM00663">
    <property type="entry name" value="RPOLA_N"/>
    <property type="match status" value="1"/>
</dbReference>
<dbReference type="SUPFAM" id="SSF64484">
    <property type="entry name" value="beta and beta-prime subunits of DNA dependent RNA-polymerase"/>
    <property type="match status" value="1"/>
</dbReference>
<protein>
    <recommendedName>
        <fullName evidence="1">DNA-directed RNA polymerase subunit beta'</fullName>
        <shortName evidence="1">RNAP subunit beta'</shortName>
        <ecNumber evidence="1">2.7.7.6</ecNumber>
    </recommendedName>
    <alternativeName>
        <fullName evidence="1">RNA polymerase subunit beta'</fullName>
    </alternativeName>
    <alternativeName>
        <fullName evidence="1">Transcriptase subunit beta'</fullName>
    </alternativeName>
</protein>
<accession>B2RL44</accession>
<feature type="chain" id="PRO_1000141788" description="DNA-directed RNA polymerase subunit beta'">
    <location>
        <begin position="1"/>
        <end position="1433"/>
    </location>
</feature>
<feature type="binding site" evidence="1">
    <location>
        <position position="66"/>
    </location>
    <ligand>
        <name>Zn(2+)</name>
        <dbReference type="ChEBI" id="CHEBI:29105"/>
        <label>1</label>
    </ligand>
</feature>
<feature type="binding site" evidence="1">
    <location>
        <position position="68"/>
    </location>
    <ligand>
        <name>Zn(2+)</name>
        <dbReference type="ChEBI" id="CHEBI:29105"/>
        <label>1</label>
    </ligand>
</feature>
<feature type="binding site" evidence="1">
    <location>
        <position position="81"/>
    </location>
    <ligand>
        <name>Zn(2+)</name>
        <dbReference type="ChEBI" id="CHEBI:29105"/>
        <label>1</label>
    </ligand>
</feature>
<feature type="binding site" evidence="1">
    <location>
        <position position="84"/>
    </location>
    <ligand>
        <name>Zn(2+)</name>
        <dbReference type="ChEBI" id="CHEBI:29105"/>
        <label>1</label>
    </ligand>
</feature>
<feature type="binding site" evidence="1">
    <location>
        <position position="473"/>
    </location>
    <ligand>
        <name>Mg(2+)</name>
        <dbReference type="ChEBI" id="CHEBI:18420"/>
    </ligand>
</feature>
<feature type="binding site" evidence="1">
    <location>
        <position position="475"/>
    </location>
    <ligand>
        <name>Mg(2+)</name>
        <dbReference type="ChEBI" id="CHEBI:18420"/>
    </ligand>
</feature>
<feature type="binding site" evidence="1">
    <location>
        <position position="477"/>
    </location>
    <ligand>
        <name>Mg(2+)</name>
        <dbReference type="ChEBI" id="CHEBI:18420"/>
    </ligand>
</feature>
<feature type="binding site" evidence="1">
    <location>
        <position position="815"/>
    </location>
    <ligand>
        <name>Zn(2+)</name>
        <dbReference type="ChEBI" id="CHEBI:29105"/>
        <label>2</label>
    </ligand>
</feature>
<feature type="binding site" evidence="1">
    <location>
        <position position="889"/>
    </location>
    <ligand>
        <name>Zn(2+)</name>
        <dbReference type="ChEBI" id="CHEBI:29105"/>
        <label>2</label>
    </ligand>
</feature>
<feature type="binding site" evidence="1">
    <location>
        <position position="896"/>
    </location>
    <ligand>
        <name>Zn(2+)</name>
        <dbReference type="ChEBI" id="CHEBI:29105"/>
        <label>2</label>
    </ligand>
</feature>
<feature type="binding site" evidence="1">
    <location>
        <position position="899"/>
    </location>
    <ligand>
        <name>Zn(2+)</name>
        <dbReference type="ChEBI" id="CHEBI:29105"/>
        <label>2</label>
    </ligand>
</feature>